<keyword id="KW-0489">Methyltransferase</keyword>
<keyword id="KW-1185">Reference proteome</keyword>
<keyword id="KW-0949">S-adenosyl-L-methionine</keyword>
<keyword id="KW-0808">Transferase</keyword>
<reference key="1">
    <citation type="journal article" date="2008" name="Genome Res.">
        <title>Insights from the complete genome sequence of Mycobacterium marinum on the evolution of Mycobacterium tuberculosis.</title>
        <authorList>
            <person name="Stinear T.P."/>
            <person name="Seemann T."/>
            <person name="Harrison P.F."/>
            <person name="Jenkin G.A."/>
            <person name="Davies J.K."/>
            <person name="Johnson P.D."/>
            <person name="Abdellah Z."/>
            <person name="Arrowsmith C."/>
            <person name="Chillingworth T."/>
            <person name="Churcher C."/>
            <person name="Clarke K."/>
            <person name="Cronin A."/>
            <person name="Davis P."/>
            <person name="Goodhead I."/>
            <person name="Holroyd N."/>
            <person name="Jagels K."/>
            <person name="Lord A."/>
            <person name="Moule S."/>
            <person name="Mungall K."/>
            <person name="Norbertczak H."/>
            <person name="Quail M.A."/>
            <person name="Rabbinowitsch E."/>
            <person name="Walker D."/>
            <person name="White B."/>
            <person name="Whitehead S."/>
            <person name="Small P.L."/>
            <person name="Brosch R."/>
            <person name="Ramakrishnan L."/>
            <person name="Fischbach M.A."/>
            <person name="Parkhill J."/>
            <person name="Cole S.T."/>
        </authorList>
    </citation>
    <scope>NUCLEOTIDE SEQUENCE [LARGE SCALE GENOMIC DNA]</scope>
    <source>
        <strain>ATCC BAA-535 / M</strain>
    </source>
</reference>
<sequence length="310" mass="33604">MPRTDNDSWDLATSVGATATMVAAARAIATNADNPLIADRFAEPLVRAVGVDFFTRWVTGDLVVADVDDTESGWQLAQMPDAMAVRTRFFDAFFQDATRAGVRQAVILASGLDARAYRLDWPAGMTVFEIDQPEVIAFKTTTLAGLGAVPRADLRTVAVDLRQDWPKALTDAGFDAGSPTAWIAEGLFGYLPPEAQDRLLDNITALSAAGSRLACEAIPNRPQQDAEKARELMRKATARWREHGFELEFGDLGYEGDRADVALYLQDLGWQSVGTQMGQLLADNGAAPIPHNDDSVTMADTIYYSSVLTA</sequence>
<protein>
    <recommendedName>
        <fullName>Putative S-adenosyl-L-methionine-dependent methyltransferase MMAR_3534</fullName>
        <ecNumber>2.1.1.-</ecNumber>
    </recommendedName>
</protein>
<comment type="function">
    <text evidence="1">Exhibits S-adenosyl-L-methionine-dependent methyltransferase activity.</text>
</comment>
<comment type="similarity">
    <text evidence="2">Belongs to the UPF0677 family.</text>
</comment>
<name>Y3534_MYCMM</name>
<dbReference type="EC" id="2.1.1.-"/>
<dbReference type="EMBL" id="CP000854">
    <property type="protein sequence ID" value="ACC41951.1"/>
    <property type="molecule type" value="Genomic_DNA"/>
</dbReference>
<dbReference type="RefSeq" id="WP_012395162.1">
    <property type="nucleotide sequence ID" value="NC_010612.1"/>
</dbReference>
<dbReference type="SMR" id="B2HK09"/>
<dbReference type="STRING" id="216594.MMAR_3534"/>
<dbReference type="KEGG" id="mmi:MMAR_3534"/>
<dbReference type="eggNOG" id="COG3315">
    <property type="taxonomic scope" value="Bacteria"/>
</dbReference>
<dbReference type="HOGENOM" id="CLU_056160_2_1_11"/>
<dbReference type="OrthoDB" id="9806164at2"/>
<dbReference type="Proteomes" id="UP000001190">
    <property type="component" value="Chromosome"/>
</dbReference>
<dbReference type="GO" id="GO:0008168">
    <property type="term" value="F:methyltransferase activity"/>
    <property type="evidence" value="ECO:0007669"/>
    <property type="project" value="UniProtKB-KW"/>
</dbReference>
<dbReference type="GO" id="GO:0032259">
    <property type="term" value="P:methylation"/>
    <property type="evidence" value="ECO:0007669"/>
    <property type="project" value="UniProtKB-KW"/>
</dbReference>
<dbReference type="FunFam" id="3.40.50.150:FF:000152">
    <property type="entry name" value="S-adenosyl-L-methionine-dependent methyltransferase"/>
    <property type="match status" value="1"/>
</dbReference>
<dbReference type="Gene3D" id="3.40.50.150">
    <property type="entry name" value="Vaccinia Virus protein VP39"/>
    <property type="match status" value="1"/>
</dbReference>
<dbReference type="InterPro" id="IPR007213">
    <property type="entry name" value="Ppm1/Ppm2/Tcmp"/>
</dbReference>
<dbReference type="InterPro" id="IPR029063">
    <property type="entry name" value="SAM-dependent_MTases_sf"/>
</dbReference>
<dbReference type="InterPro" id="IPR011610">
    <property type="entry name" value="SAM_mthyl_Trfase_ML2640-like"/>
</dbReference>
<dbReference type="NCBIfam" id="TIGR00027">
    <property type="entry name" value="mthyl_TIGR00027"/>
    <property type="match status" value="1"/>
</dbReference>
<dbReference type="PANTHER" id="PTHR43619">
    <property type="entry name" value="S-ADENOSYL-L-METHIONINE-DEPENDENT METHYLTRANSFERASE YKTD-RELATED"/>
    <property type="match status" value="1"/>
</dbReference>
<dbReference type="PANTHER" id="PTHR43619:SF2">
    <property type="entry name" value="S-ADENOSYL-L-METHIONINE-DEPENDENT METHYLTRANSFERASES SUPERFAMILY PROTEIN"/>
    <property type="match status" value="1"/>
</dbReference>
<dbReference type="Pfam" id="PF04072">
    <property type="entry name" value="LCM"/>
    <property type="match status" value="1"/>
</dbReference>
<dbReference type="SUPFAM" id="SSF53335">
    <property type="entry name" value="S-adenosyl-L-methionine-dependent methyltransferases"/>
    <property type="match status" value="1"/>
</dbReference>
<evidence type="ECO:0000250" key="1"/>
<evidence type="ECO:0000305" key="2"/>
<accession>B2HK09</accession>
<organism>
    <name type="scientific">Mycobacterium marinum (strain ATCC BAA-535 / M)</name>
    <dbReference type="NCBI Taxonomy" id="216594"/>
    <lineage>
        <taxon>Bacteria</taxon>
        <taxon>Bacillati</taxon>
        <taxon>Actinomycetota</taxon>
        <taxon>Actinomycetes</taxon>
        <taxon>Mycobacteriales</taxon>
        <taxon>Mycobacteriaceae</taxon>
        <taxon>Mycobacterium</taxon>
        <taxon>Mycobacterium ulcerans group</taxon>
    </lineage>
</organism>
<proteinExistence type="inferred from homology"/>
<feature type="chain" id="PRO_0000361167" description="Putative S-adenosyl-L-methionine-dependent methyltransferase MMAR_3534">
    <location>
        <begin position="1"/>
        <end position="310"/>
    </location>
</feature>
<feature type="binding site" evidence="1">
    <location>
        <position position="131"/>
    </location>
    <ligand>
        <name>S-adenosyl-L-methionine</name>
        <dbReference type="ChEBI" id="CHEBI:59789"/>
    </ligand>
</feature>
<feature type="binding site" evidence="1">
    <location>
        <begin position="160"/>
        <end position="161"/>
    </location>
    <ligand>
        <name>S-adenosyl-L-methionine</name>
        <dbReference type="ChEBI" id="CHEBI:59789"/>
    </ligand>
</feature>
<gene>
    <name type="ordered locus">MMAR_3534</name>
</gene>